<gene>
    <name type="ordered locus">Daro_1355</name>
</gene>
<sequence>MTQKIKCALIGPGNIGTDLLYKLKRSPFLEPVWMIGIDPESEGLKRATDMGLKTCATGVDGFLPHVLEDNVQIAFDATSAYVHAENSRKLNALGVLMIDLTPAAIGPFCVPPVNLKEHVGRREMNVNMVTCGGQATIPMVAAVSRVQPVAYGEIVATVSSKSAGPGTRKNIDEFTRTTAGAVEKVGGAKKGKAIIIINPAEPPLVMRDTVHCLTETAPDQAAITESIHAMIKEVQKYVPGYRLVNGPVFDGNRVSVYMEVTGLGDFLPTYAGNLDIMTAAGARTAEMFAEEMIKGTLKLEPVHA</sequence>
<proteinExistence type="inferred from homology"/>
<organism>
    <name type="scientific">Dechloromonas aromatica (strain RCB)</name>
    <dbReference type="NCBI Taxonomy" id="159087"/>
    <lineage>
        <taxon>Bacteria</taxon>
        <taxon>Pseudomonadati</taxon>
        <taxon>Pseudomonadota</taxon>
        <taxon>Betaproteobacteria</taxon>
        <taxon>Rhodocyclales</taxon>
        <taxon>Azonexaceae</taxon>
        <taxon>Dechloromonas</taxon>
    </lineage>
</organism>
<accession>Q47GC7</accession>
<reference key="1">
    <citation type="journal article" date="2009" name="BMC Genomics">
        <title>Metabolic analysis of the soil microbe Dechloromonas aromatica str. RCB: indications of a surprisingly complex life-style and cryptic anaerobic pathways for aromatic degradation.</title>
        <authorList>
            <person name="Salinero K.K."/>
            <person name="Keller K."/>
            <person name="Feil W.S."/>
            <person name="Feil H."/>
            <person name="Trong S."/>
            <person name="Di Bartolo G."/>
            <person name="Lapidus A."/>
        </authorList>
    </citation>
    <scope>NUCLEOTIDE SEQUENCE [LARGE SCALE GENOMIC DNA]</scope>
    <source>
        <strain>RCB</strain>
    </source>
</reference>
<keyword id="KW-0058">Aromatic hydrocarbons catabolism</keyword>
<keyword id="KW-0520">NAD</keyword>
<keyword id="KW-0560">Oxidoreductase</keyword>
<protein>
    <recommendedName>
        <fullName evidence="1">Acetaldehyde dehydrogenase 2</fullName>
        <ecNumber evidence="1">1.2.1.10</ecNumber>
    </recommendedName>
    <alternativeName>
        <fullName evidence="1">Acetaldehyde dehydrogenase [acetylating] 2</fullName>
    </alternativeName>
</protein>
<comment type="catalytic activity">
    <reaction evidence="1">
        <text>acetaldehyde + NAD(+) + CoA = acetyl-CoA + NADH + H(+)</text>
        <dbReference type="Rhea" id="RHEA:23288"/>
        <dbReference type="ChEBI" id="CHEBI:15343"/>
        <dbReference type="ChEBI" id="CHEBI:15378"/>
        <dbReference type="ChEBI" id="CHEBI:57287"/>
        <dbReference type="ChEBI" id="CHEBI:57288"/>
        <dbReference type="ChEBI" id="CHEBI:57540"/>
        <dbReference type="ChEBI" id="CHEBI:57945"/>
        <dbReference type="EC" id="1.2.1.10"/>
    </reaction>
</comment>
<comment type="similarity">
    <text evidence="1">Belongs to the acetaldehyde dehydrogenase family.</text>
</comment>
<feature type="chain" id="PRO_0000387655" description="Acetaldehyde dehydrogenase 2">
    <location>
        <begin position="1"/>
        <end position="304"/>
    </location>
</feature>
<feature type="active site" description="Acyl-thioester intermediate" evidence="1">
    <location>
        <position position="131"/>
    </location>
</feature>
<feature type="binding site" evidence="1">
    <location>
        <begin position="162"/>
        <end position="170"/>
    </location>
    <ligand>
        <name>NAD(+)</name>
        <dbReference type="ChEBI" id="CHEBI:57540"/>
    </ligand>
</feature>
<feature type="binding site" evidence="1">
    <location>
        <position position="273"/>
    </location>
    <ligand>
        <name>NAD(+)</name>
        <dbReference type="ChEBI" id="CHEBI:57540"/>
    </ligand>
</feature>
<dbReference type="EC" id="1.2.1.10" evidence="1"/>
<dbReference type="EMBL" id="CP000089">
    <property type="protein sequence ID" value="AAZ46104.1"/>
    <property type="molecule type" value="Genomic_DNA"/>
</dbReference>
<dbReference type="SMR" id="Q47GC7"/>
<dbReference type="STRING" id="159087.Daro_1355"/>
<dbReference type="KEGG" id="dar:Daro_1355"/>
<dbReference type="eggNOG" id="COG4569">
    <property type="taxonomic scope" value="Bacteria"/>
</dbReference>
<dbReference type="HOGENOM" id="CLU_062208_0_0_4"/>
<dbReference type="OrthoDB" id="9786743at2"/>
<dbReference type="GO" id="GO:0008774">
    <property type="term" value="F:acetaldehyde dehydrogenase (acetylating) activity"/>
    <property type="evidence" value="ECO:0007669"/>
    <property type="project" value="UniProtKB-UniRule"/>
</dbReference>
<dbReference type="GO" id="GO:0051287">
    <property type="term" value="F:NAD binding"/>
    <property type="evidence" value="ECO:0007669"/>
    <property type="project" value="UniProtKB-UniRule"/>
</dbReference>
<dbReference type="GO" id="GO:0009056">
    <property type="term" value="P:catabolic process"/>
    <property type="evidence" value="ECO:0007669"/>
    <property type="project" value="UniProtKB-KW"/>
</dbReference>
<dbReference type="CDD" id="cd23933">
    <property type="entry name" value="ALDH_C"/>
    <property type="match status" value="1"/>
</dbReference>
<dbReference type="Gene3D" id="3.30.360.10">
    <property type="entry name" value="Dihydrodipicolinate Reductase, domain 2"/>
    <property type="match status" value="1"/>
</dbReference>
<dbReference type="Gene3D" id="3.40.50.720">
    <property type="entry name" value="NAD(P)-binding Rossmann-like Domain"/>
    <property type="match status" value="1"/>
</dbReference>
<dbReference type="HAMAP" id="MF_01657">
    <property type="entry name" value="Ac_ald_DH_ac"/>
    <property type="match status" value="1"/>
</dbReference>
<dbReference type="InterPro" id="IPR003361">
    <property type="entry name" value="Acetaldehyde_dehydrogenase"/>
</dbReference>
<dbReference type="InterPro" id="IPR015426">
    <property type="entry name" value="Acetylaldehyde_DH_C"/>
</dbReference>
<dbReference type="InterPro" id="IPR036291">
    <property type="entry name" value="NAD(P)-bd_dom_sf"/>
</dbReference>
<dbReference type="InterPro" id="IPR000534">
    <property type="entry name" value="Semialdehyde_DH_NAD-bd"/>
</dbReference>
<dbReference type="NCBIfam" id="TIGR03215">
    <property type="entry name" value="ac_ald_DH_ac"/>
    <property type="match status" value="1"/>
</dbReference>
<dbReference type="NCBIfam" id="NF006157">
    <property type="entry name" value="PRK08300.1"/>
    <property type="match status" value="1"/>
</dbReference>
<dbReference type="Pfam" id="PF09290">
    <property type="entry name" value="AcetDehyd-dimer"/>
    <property type="match status" value="1"/>
</dbReference>
<dbReference type="PIRSF" id="PIRSF015689">
    <property type="entry name" value="Actaldh_dh_actl"/>
    <property type="match status" value="1"/>
</dbReference>
<dbReference type="SMART" id="SM00859">
    <property type="entry name" value="Semialdhyde_dh"/>
    <property type="match status" value="1"/>
</dbReference>
<dbReference type="SUPFAM" id="SSF55347">
    <property type="entry name" value="Glyceraldehyde-3-phosphate dehydrogenase-like, C-terminal domain"/>
    <property type="match status" value="1"/>
</dbReference>
<dbReference type="SUPFAM" id="SSF51735">
    <property type="entry name" value="NAD(P)-binding Rossmann-fold domains"/>
    <property type="match status" value="1"/>
</dbReference>
<name>ACDH2_DECAR</name>
<evidence type="ECO:0000255" key="1">
    <source>
        <dbReference type="HAMAP-Rule" id="MF_01657"/>
    </source>
</evidence>